<keyword id="KW-0269">Exonuclease</keyword>
<keyword id="KW-0378">Hydrolase</keyword>
<keyword id="KW-0460">Magnesium</keyword>
<keyword id="KW-0479">Metal-binding</keyword>
<keyword id="KW-0496">Mitochondrion</keyword>
<keyword id="KW-0507">mRNA processing</keyword>
<keyword id="KW-0540">Nuclease</keyword>
<keyword id="KW-0597">Phosphoprotein</keyword>
<keyword id="KW-1185">Reference proteome</keyword>
<keyword id="KW-0809">Transit peptide</keyword>
<evidence type="ECO:0000250" key="1"/>
<evidence type="ECO:0000250" key="2">
    <source>
        <dbReference type="UniProtKB" id="Q6L8Q7"/>
    </source>
</evidence>
<evidence type="ECO:0000250" key="3">
    <source>
        <dbReference type="UniProtKB" id="Q96LI5"/>
    </source>
</evidence>
<evidence type="ECO:0000256" key="4">
    <source>
        <dbReference type="SAM" id="MobiDB-lite"/>
    </source>
</evidence>
<evidence type="ECO:0000305" key="5"/>
<name>PDE12_RAT</name>
<feature type="transit peptide" description="Mitochondrion" evidence="1">
    <location>
        <begin position="1"/>
        <end position="16"/>
    </location>
</feature>
<feature type="chain" id="PRO_0000324314" description="2',5'-phosphodiesterase 12">
    <location>
        <begin position="17"/>
        <end position="608"/>
    </location>
</feature>
<feature type="region of interest" description="Disordered" evidence="4">
    <location>
        <begin position="91"/>
        <end position="111"/>
    </location>
</feature>
<feature type="compositionally biased region" description="Low complexity" evidence="4">
    <location>
        <begin position="100"/>
        <end position="111"/>
    </location>
</feature>
<feature type="active site" description="Proton donor/acceptor" evidence="3">
    <location>
        <position position="495"/>
    </location>
</feature>
<feature type="binding site" evidence="2">
    <location>
        <position position="350"/>
    </location>
    <ligand>
        <name>Mg(2+)</name>
        <dbReference type="ChEBI" id="CHEBI:18420"/>
        <label>1</label>
    </ligand>
</feature>
<feature type="binding site" evidence="2">
    <location>
        <position position="495"/>
    </location>
    <ligand>
        <name>Mg(2+)</name>
        <dbReference type="ChEBI" id="CHEBI:18420"/>
        <label>2</label>
    </ligand>
</feature>
<feature type="binding site" evidence="2">
    <location>
        <position position="497"/>
    </location>
    <ligand>
        <name>Mg(2+)</name>
        <dbReference type="ChEBI" id="CHEBI:18420"/>
        <label>2</label>
    </ligand>
</feature>
<feature type="modified residue" description="Phosphoserine" evidence="2">
    <location>
        <position position="216"/>
    </location>
</feature>
<dbReference type="EC" id="3.1.4.-" evidence="2"/>
<dbReference type="EC" id="3.1.13.4" evidence="2"/>
<dbReference type="EMBL" id="BC079396">
    <property type="protein sequence ID" value="AAH79396.1"/>
    <property type="molecule type" value="mRNA"/>
</dbReference>
<dbReference type="RefSeq" id="NP_001398637.1">
    <property type="nucleotide sequence ID" value="NM_001411708.1"/>
</dbReference>
<dbReference type="SMR" id="Q6AXQ5"/>
<dbReference type="FunCoup" id="Q6AXQ5">
    <property type="interactions" value="3923"/>
</dbReference>
<dbReference type="STRING" id="10116.ENSRNOP00000074876"/>
<dbReference type="iPTMnet" id="Q6AXQ5"/>
<dbReference type="PhosphoSitePlus" id="Q6AXQ5"/>
<dbReference type="jPOST" id="Q6AXQ5"/>
<dbReference type="PaxDb" id="10116-ENSRNOP00000043554"/>
<dbReference type="GeneID" id="306231"/>
<dbReference type="UCSC" id="RGD:1310975">
    <property type="organism name" value="rat"/>
</dbReference>
<dbReference type="AGR" id="RGD:1310975"/>
<dbReference type="RGD" id="1310975">
    <property type="gene designation" value="Pde12"/>
</dbReference>
<dbReference type="VEuPathDB" id="HostDB:ENSRNOG00000059442"/>
<dbReference type="eggNOG" id="KOG0620">
    <property type="taxonomic scope" value="Eukaryota"/>
</dbReference>
<dbReference type="HOGENOM" id="CLU_016428_7_2_1"/>
<dbReference type="InParanoid" id="Q6AXQ5"/>
<dbReference type="Reactome" id="R-RNO-8983711">
    <property type="pathway name" value="OAS antiviral response"/>
</dbReference>
<dbReference type="PRO" id="PR:Q6AXQ5"/>
<dbReference type="Proteomes" id="UP000002494">
    <property type="component" value="Chromosome 16"/>
</dbReference>
<dbReference type="Bgee" id="ENSRNOG00000059442">
    <property type="expression patterns" value="Expressed in duodenum and 18 other cell types or tissues"/>
</dbReference>
<dbReference type="ExpressionAtlas" id="Q6AXQ5">
    <property type="expression patterns" value="baseline and differential"/>
</dbReference>
<dbReference type="GO" id="GO:0005759">
    <property type="term" value="C:mitochondrial matrix"/>
    <property type="evidence" value="ECO:0000266"/>
    <property type="project" value="RGD"/>
</dbReference>
<dbReference type="GO" id="GO:0005739">
    <property type="term" value="C:mitochondrion"/>
    <property type="evidence" value="ECO:0000318"/>
    <property type="project" value="GO_Central"/>
</dbReference>
<dbReference type="GO" id="GO:0000175">
    <property type="term" value="F:3'-5'-RNA exonuclease activity"/>
    <property type="evidence" value="ECO:0000266"/>
    <property type="project" value="RGD"/>
</dbReference>
<dbReference type="GO" id="GO:0004527">
    <property type="term" value="F:exonuclease activity"/>
    <property type="evidence" value="ECO:0000266"/>
    <property type="project" value="RGD"/>
</dbReference>
<dbReference type="GO" id="GO:0046872">
    <property type="term" value="F:metal ion binding"/>
    <property type="evidence" value="ECO:0007669"/>
    <property type="project" value="UniProtKB-KW"/>
</dbReference>
<dbReference type="GO" id="GO:0004535">
    <property type="term" value="F:poly(A)-specific ribonuclease activity"/>
    <property type="evidence" value="ECO:0000266"/>
    <property type="project" value="RGD"/>
</dbReference>
<dbReference type="GO" id="GO:0140374">
    <property type="term" value="P:antiviral innate immune response"/>
    <property type="evidence" value="ECO:0000266"/>
    <property type="project" value="RGD"/>
</dbReference>
<dbReference type="GO" id="GO:0071359">
    <property type="term" value="P:cellular response to dsRNA"/>
    <property type="evidence" value="ECO:0000266"/>
    <property type="project" value="RGD"/>
</dbReference>
<dbReference type="GO" id="GO:0035457">
    <property type="term" value="P:cellular response to interferon-alpha"/>
    <property type="evidence" value="ECO:0000266"/>
    <property type="project" value="RGD"/>
</dbReference>
<dbReference type="GO" id="GO:0071346">
    <property type="term" value="P:cellular response to type II interferon"/>
    <property type="evidence" value="ECO:0000266"/>
    <property type="project" value="RGD"/>
</dbReference>
<dbReference type="GO" id="GO:0000958">
    <property type="term" value="P:mitochondrial mRNA catabolic process"/>
    <property type="evidence" value="ECO:0000266"/>
    <property type="project" value="RGD"/>
</dbReference>
<dbReference type="GO" id="GO:0006397">
    <property type="term" value="P:mRNA processing"/>
    <property type="evidence" value="ECO:0007669"/>
    <property type="project" value="UniProtKB-KW"/>
</dbReference>
<dbReference type="GO" id="GO:0000288">
    <property type="term" value="P:nuclear-transcribed mRNA catabolic process, deadenylation-dependent decay"/>
    <property type="evidence" value="ECO:0000266"/>
    <property type="project" value="RGD"/>
</dbReference>
<dbReference type="GO" id="GO:0045070">
    <property type="term" value="P:positive regulation of viral genome replication"/>
    <property type="evidence" value="ECO:0000266"/>
    <property type="project" value="RGD"/>
</dbReference>
<dbReference type="GO" id="GO:0044528">
    <property type="term" value="P:regulation of mitochondrial mRNA stability"/>
    <property type="evidence" value="ECO:0000266"/>
    <property type="project" value="RGD"/>
</dbReference>
<dbReference type="FunFam" id="3.60.10.10:FF:000018">
    <property type="entry name" value="2',5'-phosphodiesterase 12"/>
    <property type="match status" value="1"/>
</dbReference>
<dbReference type="Gene3D" id="3.60.10.10">
    <property type="entry name" value="Endonuclease/exonuclease/phosphatase"/>
    <property type="match status" value="1"/>
</dbReference>
<dbReference type="InterPro" id="IPR050410">
    <property type="entry name" value="CCR4/nocturin_mRNA_transcr"/>
</dbReference>
<dbReference type="InterPro" id="IPR036691">
    <property type="entry name" value="Endo/exonu/phosph_ase_sf"/>
</dbReference>
<dbReference type="InterPro" id="IPR005135">
    <property type="entry name" value="Endo/exonuclease/phosphatase"/>
</dbReference>
<dbReference type="InterPro" id="IPR048821">
    <property type="entry name" value="PDE12-like_N"/>
</dbReference>
<dbReference type="PANTHER" id="PTHR12121:SF37">
    <property type="entry name" value="2',5'-PHOSPHODIESTERASE 12"/>
    <property type="match status" value="1"/>
</dbReference>
<dbReference type="PANTHER" id="PTHR12121">
    <property type="entry name" value="CARBON CATABOLITE REPRESSOR PROTEIN 4"/>
    <property type="match status" value="1"/>
</dbReference>
<dbReference type="Pfam" id="PF03372">
    <property type="entry name" value="Exo_endo_phos"/>
    <property type="match status" value="1"/>
</dbReference>
<dbReference type="Pfam" id="PF21171">
    <property type="entry name" value="PDE12-like_N"/>
    <property type="match status" value="1"/>
</dbReference>
<dbReference type="SUPFAM" id="SSF56219">
    <property type="entry name" value="DNase I-like"/>
    <property type="match status" value="1"/>
</dbReference>
<proteinExistence type="evidence at transcript level"/>
<organism>
    <name type="scientific">Rattus norvegicus</name>
    <name type="common">Rat</name>
    <dbReference type="NCBI Taxonomy" id="10116"/>
    <lineage>
        <taxon>Eukaryota</taxon>
        <taxon>Metazoa</taxon>
        <taxon>Chordata</taxon>
        <taxon>Craniata</taxon>
        <taxon>Vertebrata</taxon>
        <taxon>Euteleostomi</taxon>
        <taxon>Mammalia</taxon>
        <taxon>Eutheria</taxon>
        <taxon>Euarchontoglires</taxon>
        <taxon>Glires</taxon>
        <taxon>Rodentia</taxon>
        <taxon>Myomorpha</taxon>
        <taxon>Muroidea</taxon>
        <taxon>Muridae</taxon>
        <taxon>Murinae</taxon>
        <taxon>Rattus</taxon>
    </lineage>
</organism>
<gene>
    <name type="primary">Pde12</name>
</gene>
<accession>Q6AXQ5</accession>
<protein>
    <recommendedName>
        <fullName>2',5'-phosphodiesterase 12</fullName>
        <shortName>2'-PDE</shortName>
        <shortName>2-PDE</shortName>
        <ecNumber evidence="2">3.1.4.-</ecNumber>
    </recommendedName>
    <alternativeName>
        <fullName>Mitochondrial deadenylase</fullName>
        <ecNumber evidence="2">3.1.13.4</ecNumber>
    </alternativeName>
</protein>
<comment type="function">
    <text evidence="2">Enzyme that cleaves 2',5'-phosphodiester bond linking adenosines of the 5'-triphosphorylated oligoadenylates, triphosphorylated oligoadenylates referred as 2-5A modulates the 2-5A system. Degrades triphosphorylated 2-5A to produce AMP and ATP. Also cleaves 3',5'-phosphodiester bond of oligoadenylates. Plays a role as a negative regulator of the 2-5A system that is one of the major pathways for antiviral and antitumor functions induced by interferons (IFNs). Suppression of this enzyme increases cellular 2-5A levels and decreases viral replication in cultured small-airway epithelial cells.</text>
</comment>
<comment type="catalytic activity">
    <reaction evidence="2">
        <text>Exonucleolytic cleavage of poly(A) to 5'-AMP.</text>
        <dbReference type="EC" id="3.1.13.4"/>
    </reaction>
</comment>
<comment type="cofactor">
    <cofactor evidence="2">
        <name>Mg(2+)</name>
        <dbReference type="ChEBI" id="CHEBI:18420"/>
    </cofactor>
</comment>
<comment type="subcellular location">
    <subcellularLocation>
        <location evidence="2">Mitochondrion matrix</location>
    </subcellularLocation>
</comment>
<comment type="similarity">
    <text evidence="5">Belongs to the CCR4/nocturin family.</text>
</comment>
<reference key="1">
    <citation type="journal article" date="2004" name="Genome Res.">
        <title>The status, quality, and expansion of the NIH full-length cDNA project: the Mammalian Gene Collection (MGC).</title>
        <authorList>
            <consortium name="The MGC Project Team"/>
        </authorList>
    </citation>
    <scope>NUCLEOTIDE SEQUENCE [LARGE SCALE MRNA]</scope>
    <source>
        <tissue>Testis</tissue>
    </source>
</reference>
<sequence length="608" mass="67176">MWRLPGRAALRGVRSVVEQRSPAEATTHEAVRAMERAVVRCVPSEPKLSLSFALADGSHKNMQRDQSEPLGRALSRIATNALKGHAKVAAAKKSRKNRAHSSGGAACAATGSEPAATCEPVVKLYYREEAVAEDVLNVDAWQDGAVLQIGDVKYKVERNPPAFTELQLPRYIMAGFPVCPKLGLEFGDPASSVFRWYKEVKPGAAEPGDSGLASSSHSLQSSAWIETGVDERVYTPCNADIGLRLKLHCTPGNGQRFGPSRELESVCPVEAGPGTCTFDHRHLYTKKVTEDSFIRTVSYNILADTYAQTEFSRTVLYPYCAPYALELDYRQNLIQKELTGYNADLICLQEVDRAVFSDSLVPALEAFGLEGVFRIKQHEGLATFYRKSKFRLLSQHDISFQEALKSDPLHKELLEKLALNPLAQEKVLQRSSVLQISVLQSTTDSSKKICVANTHLYWHPKGGYIRLIQMAAALVHIRHVSCDLYPGIPVIFCGDFNSTPSTGMYHFVINGSVPEDHEDWASNGEEERCGMSLTHCFKLKSACGEPAYTNYVGGFHGCLDYIFIDLNALEVEQVIPLPSHEEVTTHQALPSVSHPSDHIALVCDLKWK</sequence>